<name>THIM_HERA2</name>
<protein>
    <recommendedName>
        <fullName evidence="1">Hydroxyethylthiazole kinase</fullName>
        <ecNumber evidence="1">2.7.1.50</ecNumber>
    </recommendedName>
    <alternativeName>
        <fullName evidence="1">4-methyl-5-beta-hydroxyethylthiazole kinase</fullName>
        <shortName evidence="1">TH kinase</shortName>
        <shortName evidence="1">Thz kinase</shortName>
    </alternativeName>
</protein>
<evidence type="ECO:0000255" key="1">
    <source>
        <dbReference type="HAMAP-Rule" id="MF_00228"/>
    </source>
</evidence>
<accession>A9AZE0</accession>
<keyword id="KW-0067">ATP-binding</keyword>
<keyword id="KW-0418">Kinase</keyword>
<keyword id="KW-0460">Magnesium</keyword>
<keyword id="KW-0479">Metal-binding</keyword>
<keyword id="KW-0547">Nucleotide-binding</keyword>
<keyword id="KW-0784">Thiamine biosynthesis</keyword>
<keyword id="KW-0808">Transferase</keyword>
<comment type="function">
    <text evidence="1">Catalyzes the phosphorylation of the hydroxyl group of 4-methyl-5-beta-hydroxyethylthiazole (THZ).</text>
</comment>
<comment type="catalytic activity">
    <reaction evidence="1">
        <text>5-(2-hydroxyethyl)-4-methylthiazole + ATP = 4-methyl-5-(2-phosphooxyethyl)-thiazole + ADP + H(+)</text>
        <dbReference type="Rhea" id="RHEA:24212"/>
        <dbReference type="ChEBI" id="CHEBI:15378"/>
        <dbReference type="ChEBI" id="CHEBI:17957"/>
        <dbReference type="ChEBI" id="CHEBI:30616"/>
        <dbReference type="ChEBI" id="CHEBI:58296"/>
        <dbReference type="ChEBI" id="CHEBI:456216"/>
        <dbReference type="EC" id="2.7.1.50"/>
    </reaction>
</comment>
<comment type="cofactor">
    <cofactor evidence="1">
        <name>Mg(2+)</name>
        <dbReference type="ChEBI" id="CHEBI:18420"/>
    </cofactor>
</comment>
<comment type="pathway">
    <text evidence="1">Cofactor biosynthesis; thiamine diphosphate biosynthesis; 4-methyl-5-(2-phosphoethyl)-thiazole from 5-(2-hydroxyethyl)-4-methylthiazole: step 1/1.</text>
</comment>
<comment type="similarity">
    <text evidence="1">Belongs to the Thz kinase family.</text>
</comment>
<dbReference type="EC" id="2.7.1.50" evidence="1"/>
<dbReference type="EMBL" id="CP000875">
    <property type="protein sequence ID" value="ABX05084.1"/>
    <property type="molecule type" value="Genomic_DNA"/>
</dbReference>
<dbReference type="SMR" id="A9AZE0"/>
<dbReference type="FunCoup" id="A9AZE0">
    <property type="interactions" value="182"/>
</dbReference>
<dbReference type="STRING" id="316274.Haur_2444"/>
<dbReference type="KEGG" id="hau:Haur_2444"/>
<dbReference type="eggNOG" id="COG2145">
    <property type="taxonomic scope" value="Bacteria"/>
</dbReference>
<dbReference type="HOGENOM" id="CLU_019943_0_1_0"/>
<dbReference type="InParanoid" id="A9AZE0"/>
<dbReference type="UniPathway" id="UPA00060">
    <property type="reaction ID" value="UER00139"/>
</dbReference>
<dbReference type="Proteomes" id="UP000000787">
    <property type="component" value="Chromosome"/>
</dbReference>
<dbReference type="GO" id="GO:0005524">
    <property type="term" value="F:ATP binding"/>
    <property type="evidence" value="ECO:0007669"/>
    <property type="project" value="UniProtKB-UniRule"/>
</dbReference>
<dbReference type="GO" id="GO:0004417">
    <property type="term" value="F:hydroxyethylthiazole kinase activity"/>
    <property type="evidence" value="ECO:0007669"/>
    <property type="project" value="UniProtKB-UniRule"/>
</dbReference>
<dbReference type="GO" id="GO:0000287">
    <property type="term" value="F:magnesium ion binding"/>
    <property type="evidence" value="ECO:0007669"/>
    <property type="project" value="UniProtKB-UniRule"/>
</dbReference>
<dbReference type="GO" id="GO:0009228">
    <property type="term" value="P:thiamine biosynthetic process"/>
    <property type="evidence" value="ECO:0007669"/>
    <property type="project" value="UniProtKB-KW"/>
</dbReference>
<dbReference type="GO" id="GO:0009229">
    <property type="term" value="P:thiamine diphosphate biosynthetic process"/>
    <property type="evidence" value="ECO:0007669"/>
    <property type="project" value="UniProtKB-UniRule"/>
</dbReference>
<dbReference type="CDD" id="cd01170">
    <property type="entry name" value="THZ_kinase"/>
    <property type="match status" value="1"/>
</dbReference>
<dbReference type="Gene3D" id="3.40.1190.20">
    <property type="match status" value="1"/>
</dbReference>
<dbReference type="HAMAP" id="MF_00228">
    <property type="entry name" value="Thz_kinase"/>
    <property type="match status" value="1"/>
</dbReference>
<dbReference type="InterPro" id="IPR000417">
    <property type="entry name" value="Hyethyz_kinase"/>
</dbReference>
<dbReference type="InterPro" id="IPR029056">
    <property type="entry name" value="Ribokinase-like"/>
</dbReference>
<dbReference type="NCBIfam" id="NF006830">
    <property type="entry name" value="PRK09355.1"/>
    <property type="match status" value="1"/>
</dbReference>
<dbReference type="Pfam" id="PF02110">
    <property type="entry name" value="HK"/>
    <property type="match status" value="1"/>
</dbReference>
<dbReference type="PIRSF" id="PIRSF000513">
    <property type="entry name" value="Thz_kinase"/>
    <property type="match status" value="1"/>
</dbReference>
<dbReference type="PRINTS" id="PR01099">
    <property type="entry name" value="HYETHTZKNASE"/>
</dbReference>
<dbReference type="SUPFAM" id="SSF53613">
    <property type="entry name" value="Ribokinase-like"/>
    <property type="match status" value="1"/>
</dbReference>
<reference key="1">
    <citation type="journal article" date="2011" name="Stand. Genomic Sci.">
        <title>Complete genome sequence of the filamentous gliding predatory bacterium Herpetosiphon aurantiacus type strain (114-95(T)).</title>
        <authorList>
            <person name="Kiss H."/>
            <person name="Nett M."/>
            <person name="Domin N."/>
            <person name="Martin K."/>
            <person name="Maresca J.A."/>
            <person name="Copeland A."/>
            <person name="Lapidus A."/>
            <person name="Lucas S."/>
            <person name="Berry K.W."/>
            <person name="Glavina Del Rio T."/>
            <person name="Dalin E."/>
            <person name="Tice H."/>
            <person name="Pitluck S."/>
            <person name="Richardson P."/>
            <person name="Bruce D."/>
            <person name="Goodwin L."/>
            <person name="Han C."/>
            <person name="Detter J.C."/>
            <person name="Schmutz J."/>
            <person name="Brettin T."/>
            <person name="Land M."/>
            <person name="Hauser L."/>
            <person name="Kyrpides N.C."/>
            <person name="Ivanova N."/>
            <person name="Goeker M."/>
            <person name="Woyke T."/>
            <person name="Klenk H.P."/>
            <person name="Bryant D.A."/>
        </authorList>
    </citation>
    <scope>NUCLEOTIDE SEQUENCE [LARGE SCALE GENOMIC DNA]</scope>
    <source>
        <strain>ATCC 23779 / DSM 785 / 114-95</strain>
    </source>
</reference>
<gene>
    <name evidence="1" type="primary">thiM</name>
    <name type="ordered locus">Haur_2444</name>
</gene>
<proteinExistence type="inferred from homology"/>
<feature type="chain" id="PRO_0000383867" description="Hydroxyethylthiazole kinase">
    <location>
        <begin position="1"/>
        <end position="270"/>
    </location>
</feature>
<feature type="binding site" evidence="1">
    <location>
        <position position="46"/>
    </location>
    <ligand>
        <name>substrate</name>
    </ligand>
</feature>
<feature type="binding site" evidence="1">
    <location>
        <position position="120"/>
    </location>
    <ligand>
        <name>ATP</name>
        <dbReference type="ChEBI" id="CHEBI:30616"/>
    </ligand>
</feature>
<feature type="binding site" evidence="1">
    <location>
        <position position="166"/>
    </location>
    <ligand>
        <name>ATP</name>
        <dbReference type="ChEBI" id="CHEBI:30616"/>
    </ligand>
</feature>
<feature type="binding site" evidence="1">
    <location>
        <position position="193"/>
    </location>
    <ligand>
        <name>substrate</name>
    </ligand>
</feature>
<organism>
    <name type="scientific">Herpetosiphon aurantiacus (strain ATCC 23779 / DSM 785 / 114-95)</name>
    <dbReference type="NCBI Taxonomy" id="316274"/>
    <lineage>
        <taxon>Bacteria</taxon>
        <taxon>Bacillati</taxon>
        <taxon>Chloroflexota</taxon>
        <taxon>Chloroflexia</taxon>
        <taxon>Herpetosiphonales</taxon>
        <taxon>Herpetosiphonaceae</taxon>
        <taxon>Herpetosiphon</taxon>
    </lineage>
</organism>
<sequence>MLTPSSIADCWHSLRQQRPLVHVVPNLVTANDLANALLAVGAAPIMAIEPAEFSQLPNRALVLSMGTPTIDRMQLLAQAGRAAQAKNLPIVLDPVGVGATVWRKQAALALIATVQPTILRLNLGEALALLDQTGVAHGVDVGHAWHDPRLVAGQLARRYGCVVGLTGVIDVVSDGMNWIQLEHGHQWLSQITGAGCIVTSLIGALAAVINDVMLATVSAIAGFGMAAEVAAMHALGPASFRVALFDQLGAIAELIDNSRLSYRMEQHDAD</sequence>